<organism>
    <name type="scientific">Tetronarce californica</name>
    <name type="common">Pacific electric ray</name>
    <name type="synonym">Torpedo californica</name>
    <dbReference type="NCBI Taxonomy" id="7787"/>
    <lineage>
        <taxon>Eukaryota</taxon>
        <taxon>Metazoa</taxon>
        <taxon>Chordata</taxon>
        <taxon>Craniata</taxon>
        <taxon>Vertebrata</taxon>
        <taxon>Chondrichthyes</taxon>
        <taxon>Elasmobranchii</taxon>
        <taxon>Batoidea</taxon>
        <taxon>Torpediniformes</taxon>
        <taxon>Torpedinidae</taxon>
        <taxon>Tetronarce</taxon>
    </lineage>
</organism>
<comment type="function">
    <text evidence="2 3 6 8">Sulfotransferase that utilizes 3'-phospho-5'-adenylyl sulfate (PAPS) as sulfonate donor to catalyze the transfer of sulfate to position 6 of the N-acetylgalactosamine (GalNAc) residue of chondroitin (Probable). Chondroitin sulfate constitutes the predominant proteoglycan present in cartilage and is distributed on the surfaces of many cells and extracellular matrices (PubMed:9736640). Catalyzes with a lower efficiency the sulfation of Gal residues of keratan sulfate, another glycosaminoglycan (By similarity). Can also catalyze the sulfation of the Gal residues in sialyl N-acetyllactosamine (sialyl LacNAc) oligosaccharides (By similarity).</text>
</comment>
<comment type="catalytic activity">
    <reaction evidence="8">
        <text>chondroitin beta-D-glucuronate + n 3'-phosphoadenylyl sulfate = chondroitin 6'-sulfate + n adenosine 3',5'-bisphosphate + n H(+)</text>
        <dbReference type="Rhea" id="RHEA:11108"/>
        <dbReference type="Rhea" id="RHEA-COMP:9827"/>
        <dbReference type="Rhea" id="RHEA-COMP:9828"/>
        <dbReference type="ChEBI" id="CHEBI:15378"/>
        <dbReference type="ChEBI" id="CHEBI:57652"/>
        <dbReference type="ChEBI" id="CHEBI:58339"/>
        <dbReference type="ChEBI" id="CHEBI:58343"/>
        <dbReference type="ChEBI" id="CHEBI:62065"/>
        <dbReference type="EC" id="2.8.2.17"/>
    </reaction>
    <physiologicalReaction direction="left-to-right" evidence="8">
        <dbReference type="Rhea" id="RHEA:11109"/>
    </physiologicalReaction>
</comment>
<comment type="catalytic activity">
    <reaction evidence="2">
        <text>3'-phosphoadenylyl sulfate + keratan = adenosine 3',5'-bisphosphate + keratan 6'-sulfate.</text>
        <dbReference type="EC" id="2.8.2.21"/>
    </reaction>
</comment>
<comment type="subcellular location">
    <subcellularLocation>
        <location evidence="1">Golgi apparatus membrane</location>
        <topology evidence="1">Single-pass type II membrane protein</topology>
    </subcellularLocation>
</comment>
<comment type="tissue specificity">
    <text evidence="5">In electric organ, it is moderately expressed in spinal cord and electric lobe and undetectable in non-neural tissues. Expressed in a punctate distribution in the innervated portion of electrocytes. In the CNS, it is localized within the somas of motor neurons and neurons of the electromotor nucleus.</text>
</comment>
<comment type="PTM">
    <text evidence="3">N-glycosylated.</text>
</comment>
<comment type="similarity">
    <text evidence="7">Belongs to the sulfotransferase 1 family. Gal/GlcNAc/GalNAc subfamily.</text>
</comment>
<keyword id="KW-0119">Carbohydrate metabolism</keyword>
<keyword id="KW-0325">Glycoprotein</keyword>
<keyword id="KW-0333">Golgi apparatus</keyword>
<keyword id="KW-0472">Membrane</keyword>
<keyword id="KW-0735">Signal-anchor</keyword>
<keyword id="KW-0808">Transferase</keyword>
<keyword id="KW-0812">Transmembrane</keyword>
<keyword id="KW-1133">Transmembrane helix</keyword>
<proteinExistence type="evidence at protein level"/>
<feature type="chain" id="PRO_0000085192" description="Carbohydrate sulfotransferase 3">
    <location>
        <begin position="1"/>
        <end position="441"/>
    </location>
</feature>
<feature type="topological domain" description="Cytoplasmic" evidence="4">
    <location>
        <begin position="1"/>
        <end position="4"/>
    </location>
</feature>
<feature type="transmembrane region" description="Helical; Signal-anchor for type II membrane protein" evidence="4">
    <location>
        <begin position="5"/>
        <end position="21"/>
    </location>
</feature>
<feature type="topological domain" description="Lumenal" evidence="4">
    <location>
        <begin position="22"/>
        <end position="441"/>
    </location>
</feature>
<feature type="binding site" evidence="1">
    <location>
        <begin position="106"/>
        <end position="112"/>
    </location>
    <ligand>
        <name>3'-phosphoadenylyl sulfate</name>
        <dbReference type="ChEBI" id="CHEBI:58339"/>
    </ligand>
</feature>
<feature type="binding site" evidence="1">
    <location>
        <begin position="266"/>
        <end position="274"/>
    </location>
    <ligand>
        <name>3'-phosphoadenylyl sulfate</name>
        <dbReference type="ChEBI" id="CHEBI:58339"/>
    </ligand>
</feature>
<feature type="glycosylation site" description="N-linked (GlcNAc...) asparagine" evidence="4">
    <location>
        <position position="47"/>
    </location>
</feature>
<feature type="glycosylation site" description="N-linked (GlcNAc...) asparagine" evidence="4">
    <location>
        <position position="58"/>
    </location>
</feature>
<feature type="glycosylation site" description="N-linked (GlcNAc...) asparagine" evidence="4">
    <location>
        <position position="221"/>
    </location>
</feature>
<feature type="glycosylation site" description="N-linked (GlcNAc...) asparagine" evidence="4">
    <location>
        <position position="427"/>
    </location>
</feature>
<sequence>MKMRSKYAIILFFVVALVIIEKERNIISRVSDKFTLKFPHAESVAPNNTISARSLTKNNSLLANSVAAVWKLLKARRSYSSLQSAASSDVRKVLKGRKHLLLMATTRTGSSFVGEFFNQNNDIFYLFEPLWHVEKTVTFEPGGMNAVASSIIYRDVVQQLMLCDLYTLENFLFPMADRHLTGILFRRGSSKSLCEGEVCTPPKKGGTEKFPCRLRDCGLLNLTLATQACLQKQHVAIKTVPLRQLEFLRPLVEDFRINLKIIQLVRDPRAVLASRMVAFPSKYNAWKKWANEGRVPDDDEVGKIRGNCENLRATAQLGISQPPWLKDRFLLMRYEDIALEPVKRAQEMYRFSGIPMTPEVKKWIYENTQVSKASNNIYSTHKISSEQFEKWRLGLPFKIARVVQQVCEPAMKLFGYKLVKDAATLANRSASLLENRNFWIT</sequence>
<gene>
    <name type="primary">CHST3</name>
    <name evidence="6" type="synonym">NSIST</name>
</gene>
<reference key="1">
    <citation type="journal article" date="1998" name="J. Neurosci.">
        <title>Expression cloning and characterization of NSIST, a novel sulfotransferase expressed by a subset of neurons and postsynaptic targets.</title>
        <authorList>
            <person name="Nastuk M.A."/>
            <person name="Davis S."/>
            <person name="Yancopoulos G.D."/>
            <person name="Fallon J.R."/>
        </authorList>
    </citation>
    <scope>NUCLEOTIDE SEQUENCE [MRNA]</scope>
    <scope>FUNCTION</scope>
    <scope>CATALYTIC ACTIVITY</scope>
    <scope>TISSUE SPECIFICITY</scope>
</reference>
<protein>
    <recommendedName>
        <fullName evidence="8">Carbohydrate sulfotransferase 3</fullName>
        <ecNumber evidence="8">2.8.2.17</ecNumber>
        <ecNumber evidence="2">2.8.2.21</ecNumber>
    </recommendedName>
    <alternativeName>
        <fullName>Chondroitin 6-O-sulfotransferase 1</fullName>
        <shortName>C6ST-1</shortName>
    </alternativeName>
    <alternativeName>
        <fullName evidence="6">Nervous system involved sulfotransferase</fullName>
    </alternativeName>
</protein>
<evidence type="ECO:0000250" key="1"/>
<evidence type="ECO:0000250" key="2">
    <source>
        <dbReference type="UniProtKB" id="Q7LGC8"/>
    </source>
</evidence>
<evidence type="ECO:0000250" key="3">
    <source>
        <dbReference type="UniProtKB" id="Q92179"/>
    </source>
</evidence>
<evidence type="ECO:0000255" key="4"/>
<evidence type="ECO:0000269" key="5">
    <source>
    </source>
</evidence>
<evidence type="ECO:0000303" key="6">
    <source>
    </source>
</evidence>
<evidence type="ECO:0000305" key="7"/>
<evidence type="ECO:0000305" key="8">
    <source>
    </source>
</evidence>
<name>CHST3_TETCF</name>
<accession>O93403</accession>
<dbReference type="EC" id="2.8.2.17" evidence="8"/>
<dbReference type="EC" id="2.8.2.21" evidence="2"/>
<dbReference type="EMBL" id="AF079875">
    <property type="protein sequence ID" value="AAC28491.1"/>
    <property type="molecule type" value="mRNA"/>
</dbReference>
<dbReference type="GlyCosmos" id="O93403">
    <property type="glycosylation" value="4 sites, No reported glycans"/>
</dbReference>
<dbReference type="GO" id="GO:0000139">
    <property type="term" value="C:Golgi membrane"/>
    <property type="evidence" value="ECO:0007669"/>
    <property type="project" value="UniProtKB-SubCell"/>
</dbReference>
<dbReference type="GO" id="GO:0008459">
    <property type="term" value="F:chondroitin 6-sulfotransferase activity"/>
    <property type="evidence" value="ECO:0000250"/>
    <property type="project" value="UniProtKB"/>
</dbReference>
<dbReference type="GO" id="GO:0001517">
    <property type="term" value="F:N-acetylglucosamine 6-O-sulfotransferase activity"/>
    <property type="evidence" value="ECO:0007669"/>
    <property type="project" value="TreeGrafter"/>
</dbReference>
<dbReference type="GO" id="GO:0005975">
    <property type="term" value="P:carbohydrate metabolic process"/>
    <property type="evidence" value="ECO:0007669"/>
    <property type="project" value="InterPro"/>
</dbReference>
<dbReference type="GO" id="GO:0050650">
    <property type="term" value="P:chondroitin sulfate proteoglycan biosynthetic process"/>
    <property type="evidence" value="ECO:0000250"/>
    <property type="project" value="UniProtKB"/>
</dbReference>
<dbReference type="GO" id="GO:0006044">
    <property type="term" value="P:N-acetylglucosamine metabolic process"/>
    <property type="evidence" value="ECO:0007669"/>
    <property type="project" value="TreeGrafter"/>
</dbReference>
<dbReference type="FunFam" id="3.40.50.300:FF:000938">
    <property type="entry name" value="Sulfotransferase"/>
    <property type="match status" value="1"/>
</dbReference>
<dbReference type="Gene3D" id="3.40.50.300">
    <property type="entry name" value="P-loop containing nucleotide triphosphate hydrolases"/>
    <property type="match status" value="1"/>
</dbReference>
<dbReference type="InterPro" id="IPR016469">
    <property type="entry name" value="Carbohydrate_sulfotransferase"/>
</dbReference>
<dbReference type="InterPro" id="IPR051135">
    <property type="entry name" value="Gal/GlcNAc/GalNAc_ST"/>
</dbReference>
<dbReference type="InterPro" id="IPR027417">
    <property type="entry name" value="P-loop_NTPase"/>
</dbReference>
<dbReference type="InterPro" id="IPR000863">
    <property type="entry name" value="Sulfotransferase_dom"/>
</dbReference>
<dbReference type="PANTHER" id="PTHR10704">
    <property type="entry name" value="CARBOHYDRATE SULFOTRANSFERASE"/>
    <property type="match status" value="1"/>
</dbReference>
<dbReference type="PANTHER" id="PTHR10704:SF60">
    <property type="entry name" value="CARBOHYDRATE SULFOTRANSFERASE 3"/>
    <property type="match status" value="1"/>
</dbReference>
<dbReference type="Pfam" id="PF00685">
    <property type="entry name" value="Sulfotransfer_1"/>
    <property type="match status" value="1"/>
</dbReference>
<dbReference type="PIRSF" id="PIRSF005883">
    <property type="entry name" value="Carbohydrate_sulfotransferase"/>
    <property type="match status" value="1"/>
</dbReference>
<dbReference type="SUPFAM" id="SSF52540">
    <property type="entry name" value="P-loop containing nucleoside triphosphate hydrolases"/>
    <property type="match status" value="1"/>
</dbReference>